<gene>
    <name evidence="1" type="primary">mobA</name>
</gene>
<proteinExistence type="inferred from homology"/>
<feature type="chain" id="PRO_0000134890" description="Probable molybdenum cofactor guanylyltransferase">
    <location>
        <begin position="1"/>
        <end position="221"/>
    </location>
</feature>
<feature type="binding site" evidence="1">
    <location>
        <begin position="17"/>
        <end position="19"/>
    </location>
    <ligand>
        <name>GTP</name>
        <dbReference type="ChEBI" id="CHEBI:37565"/>
    </ligand>
</feature>
<feature type="binding site" evidence="1">
    <location>
        <position position="29"/>
    </location>
    <ligand>
        <name>GTP</name>
        <dbReference type="ChEBI" id="CHEBI:37565"/>
    </ligand>
</feature>
<feature type="binding site" evidence="1">
    <location>
        <position position="74"/>
    </location>
    <ligand>
        <name>GTP</name>
        <dbReference type="ChEBI" id="CHEBI:37565"/>
    </ligand>
</feature>
<feature type="binding site" evidence="1">
    <location>
        <position position="103"/>
    </location>
    <ligand>
        <name>GTP</name>
        <dbReference type="ChEBI" id="CHEBI:37565"/>
    </ligand>
</feature>
<feature type="binding site" evidence="1">
    <location>
        <position position="103"/>
    </location>
    <ligand>
        <name>Mg(2+)</name>
        <dbReference type="ChEBI" id="CHEBI:18420"/>
    </ligand>
</feature>
<keyword id="KW-0963">Cytoplasm</keyword>
<keyword id="KW-0342">GTP-binding</keyword>
<keyword id="KW-0460">Magnesium</keyword>
<keyword id="KW-0479">Metal-binding</keyword>
<keyword id="KW-0501">Molybdenum cofactor biosynthesis</keyword>
<keyword id="KW-0547">Nucleotide-binding</keyword>
<keyword id="KW-0808">Transferase</keyword>
<evidence type="ECO:0000255" key="1">
    <source>
        <dbReference type="HAMAP-Rule" id="MF_00316"/>
    </source>
</evidence>
<dbReference type="EC" id="2.7.7.77" evidence="1"/>
<dbReference type="EMBL" id="AJ312124">
    <property type="protein sequence ID" value="CAC39236.1"/>
    <property type="molecule type" value="Genomic_DNA"/>
</dbReference>
<dbReference type="SMR" id="Q93SF3"/>
<dbReference type="GO" id="GO:0005737">
    <property type="term" value="C:cytoplasm"/>
    <property type="evidence" value="ECO:0007669"/>
    <property type="project" value="UniProtKB-SubCell"/>
</dbReference>
<dbReference type="GO" id="GO:0005525">
    <property type="term" value="F:GTP binding"/>
    <property type="evidence" value="ECO:0007669"/>
    <property type="project" value="UniProtKB-UniRule"/>
</dbReference>
<dbReference type="GO" id="GO:0046872">
    <property type="term" value="F:metal ion binding"/>
    <property type="evidence" value="ECO:0007669"/>
    <property type="project" value="UniProtKB-KW"/>
</dbReference>
<dbReference type="GO" id="GO:0061603">
    <property type="term" value="F:molybdenum cofactor guanylyltransferase activity"/>
    <property type="evidence" value="ECO:0007669"/>
    <property type="project" value="UniProtKB-EC"/>
</dbReference>
<dbReference type="GO" id="GO:0006777">
    <property type="term" value="P:Mo-molybdopterin cofactor biosynthetic process"/>
    <property type="evidence" value="ECO:0007669"/>
    <property type="project" value="UniProtKB-KW"/>
</dbReference>
<dbReference type="CDD" id="cd02503">
    <property type="entry name" value="MobA"/>
    <property type="match status" value="1"/>
</dbReference>
<dbReference type="Gene3D" id="3.90.550.10">
    <property type="entry name" value="Spore Coat Polysaccharide Biosynthesis Protein SpsA, Chain A"/>
    <property type="match status" value="1"/>
</dbReference>
<dbReference type="HAMAP" id="MF_00316">
    <property type="entry name" value="MobA"/>
    <property type="match status" value="1"/>
</dbReference>
<dbReference type="InterPro" id="IPR025877">
    <property type="entry name" value="MobA-like_NTP_Trfase"/>
</dbReference>
<dbReference type="InterPro" id="IPR013482">
    <property type="entry name" value="Molybde_CF_guanTrfase"/>
</dbReference>
<dbReference type="InterPro" id="IPR029044">
    <property type="entry name" value="Nucleotide-diphossugar_trans"/>
</dbReference>
<dbReference type="PANTHER" id="PTHR19136">
    <property type="entry name" value="MOLYBDENUM COFACTOR GUANYLYLTRANSFERASE"/>
    <property type="match status" value="1"/>
</dbReference>
<dbReference type="PANTHER" id="PTHR19136:SF81">
    <property type="entry name" value="MOLYBDENUM COFACTOR GUANYLYLTRANSFERASE"/>
    <property type="match status" value="1"/>
</dbReference>
<dbReference type="Pfam" id="PF12804">
    <property type="entry name" value="NTP_transf_3"/>
    <property type="match status" value="1"/>
</dbReference>
<dbReference type="SUPFAM" id="SSF53448">
    <property type="entry name" value="Nucleotide-diphospho-sugar transferases"/>
    <property type="match status" value="1"/>
</dbReference>
<reference key="1">
    <citation type="submission" date="2001-05" db="EMBL/GenBank/DDBJ databases">
        <title>Molecular analysis of two different gene clusters encoding selenocysteine-containing and tungsten-dependent formate dehydrogenase of Eubacterium acidaminophilum.</title>
        <authorList>
            <person name="Graentzdoerffer A."/>
            <person name="Pich A."/>
            <person name="Andreesen J.R."/>
        </authorList>
    </citation>
    <scope>NUCLEOTIDE SEQUENCE [GENOMIC DNA]</scope>
    <source>
        <strain>ATCC 49065 / DSM 3953 / al-2</strain>
    </source>
</reference>
<name>MOBA_PEPAC</name>
<protein>
    <recommendedName>
        <fullName evidence="1">Probable molybdenum cofactor guanylyltransferase</fullName>
        <shortName evidence="1">MoCo guanylyltransferase</shortName>
        <ecNumber evidence="1">2.7.7.77</ecNumber>
    </recommendedName>
    <alternativeName>
        <fullName evidence="1">GTP:molybdopterin guanylyltransferase</fullName>
    </alternativeName>
    <alternativeName>
        <fullName evidence="1">Mo-MPT guanylyltransferase</fullName>
    </alternativeName>
    <alternativeName>
        <fullName evidence="1">Molybdopterin guanylyltransferase</fullName>
    </alternativeName>
    <alternativeName>
        <fullName evidence="1">Molybdopterin-guanine dinucleotide synthase</fullName>
        <shortName evidence="1">MGD synthase</shortName>
    </alternativeName>
</protein>
<organism>
    <name type="scientific">Peptoclostridium acidaminophilum</name>
    <name type="common">Eubacterium acidaminophilum</name>
    <dbReference type="NCBI Taxonomy" id="1731"/>
    <lineage>
        <taxon>Bacteria</taxon>
        <taxon>Bacillati</taxon>
        <taxon>Bacillota</taxon>
        <taxon>Clostridia</taxon>
        <taxon>Peptostreptococcales</taxon>
        <taxon>Peptoclostridiaceae</taxon>
        <taxon>Peptoclostridium</taxon>
    </lineage>
</organism>
<comment type="function">
    <text evidence="1">Transfers a GMP moiety from GTP to Mo-molybdopterin (Mo-MPT) cofactor (Moco or molybdenum cofactor) to form Mo-molybdopterin guanine dinucleotide (Mo-MGD) cofactor.</text>
</comment>
<comment type="catalytic activity">
    <reaction evidence="1">
        <text>Mo-molybdopterin + GTP + H(+) = Mo-molybdopterin guanine dinucleotide + diphosphate</text>
        <dbReference type="Rhea" id="RHEA:34243"/>
        <dbReference type="ChEBI" id="CHEBI:15378"/>
        <dbReference type="ChEBI" id="CHEBI:33019"/>
        <dbReference type="ChEBI" id="CHEBI:37565"/>
        <dbReference type="ChEBI" id="CHEBI:71302"/>
        <dbReference type="ChEBI" id="CHEBI:71310"/>
        <dbReference type="EC" id="2.7.7.77"/>
    </reaction>
</comment>
<comment type="cofactor">
    <cofactor evidence="1">
        <name>Mg(2+)</name>
        <dbReference type="ChEBI" id="CHEBI:18420"/>
    </cofactor>
</comment>
<comment type="subcellular location">
    <subcellularLocation>
        <location evidence="1">Cytoplasm</location>
    </subcellularLocation>
</comment>
<comment type="domain">
    <text evidence="1">The N-terminal domain determines nucleotide recognition and specific binding, while the C-terminal domain determines the specific binding to the target protein.</text>
</comment>
<comment type="similarity">
    <text evidence="1">Belongs to the MobA family.</text>
</comment>
<accession>Q93SF3</accession>
<sequence>MCKEIEGQKLFGSAIILAGGRSSRMGFDKQFIEINEKRLIEITAGRLAQIFDEIIIVTNRPEMHSCCQYKLTSDIIKGKGPLGGIHAGLLAAESEFVFAIACDMPYINLDYIEHMKCVVESSIKAGEDIDACITLKGEWIEPFNAFYRKSLVKSIEEHLESDKRAVYSLLKQLNTTYISEFEARRFSPDWSMFFNMNTMEELRQYSQVTQEEKPNGKVEIL</sequence>